<feature type="chain" id="PRO_1000213626" description="UPF0298 protein GWCH70_0997">
    <location>
        <begin position="1"/>
        <end position="93"/>
    </location>
</feature>
<keyword id="KW-0963">Cytoplasm</keyword>
<proteinExistence type="inferred from homology"/>
<reference key="1">
    <citation type="submission" date="2009-06" db="EMBL/GenBank/DDBJ databases">
        <title>Complete sequence of chromosome of Geopacillus sp. WCH70.</title>
        <authorList>
            <consortium name="US DOE Joint Genome Institute"/>
            <person name="Lucas S."/>
            <person name="Copeland A."/>
            <person name="Lapidus A."/>
            <person name="Glavina del Rio T."/>
            <person name="Dalin E."/>
            <person name="Tice H."/>
            <person name="Bruce D."/>
            <person name="Goodwin L."/>
            <person name="Pitluck S."/>
            <person name="Chertkov O."/>
            <person name="Brettin T."/>
            <person name="Detter J.C."/>
            <person name="Han C."/>
            <person name="Larimer F."/>
            <person name="Land M."/>
            <person name="Hauser L."/>
            <person name="Kyrpides N."/>
            <person name="Mikhailova N."/>
            <person name="Brumm P."/>
            <person name="Mead D.A."/>
            <person name="Richardson P."/>
        </authorList>
    </citation>
    <scope>NUCLEOTIDE SEQUENCE [LARGE SCALE GENOMIC DNA]</scope>
    <source>
        <strain>WCH70</strain>
    </source>
</reference>
<dbReference type="EMBL" id="CP001638">
    <property type="protein sequence ID" value="ACS23857.1"/>
    <property type="molecule type" value="Genomic_DNA"/>
</dbReference>
<dbReference type="SMR" id="C5D8K0"/>
<dbReference type="STRING" id="471223.GWCH70_0997"/>
<dbReference type="KEGG" id="gwc:GWCH70_0997"/>
<dbReference type="eggNOG" id="COG4471">
    <property type="taxonomic scope" value="Bacteria"/>
</dbReference>
<dbReference type="HOGENOM" id="CLU_159890_2_0_9"/>
<dbReference type="OrthoDB" id="2990788at2"/>
<dbReference type="GO" id="GO:0005737">
    <property type="term" value="C:cytoplasm"/>
    <property type="evidence" value="ECO:0007669"/>
    <property type="project" value="UniProtKB-SubCell"/>
</dbReference>
<dbReference type="HAMAP" id="MF_01126">
    <property type="entry name" value="UPF0298"/>
    <property type="match status" value="1"/>
</dbReference>
<dbReference type="InterPro" id="IPR016979">
    <property type="entry name" value="DUF2129"/>
</dbReference>
<dbReference type="NCBIfam" id="NF002777">
    <property type="entry name" value="PRK02886.1"/>
    <property type="match status" value="1"/>
</dbReference>
<dbReference type="Pfam" id="PF09902">
    <property type="entry name" value="DUF2129"/>
    <property type="match status" value="1"/>
</dbReference>
<dbReference type="PIRSF" id="PIRSF031653">
    <property type="entry name" value="UCP031653"/>
    <property type="match status" value="1"/>
</dbReference>
<accession>C5D8K0</accession>
<comment type="subcellular location">
    <subcellularLocation>
        <location evidence="1">Cytoplasm</location>
    </subcellularLocation>
</comment>
<comment type="similarity">
    <text evidence="1">Belongs to the UPF0298 family.</text>
</comment>
<protein>
    <recommendedName>
        <fullName evidence="1">UPF0298 protein GWCH70_0997</fullName>
    </recommendedName>
</protein>
<organism>
    <name type="scientific">Geobacillus sp. (strain WCH70)</name>
    <dbReference type="NCBI Taxonomy" id="471223"/>
    <lineage>
        <taxon>Bacteria</taxon>
        <taxon>Bacillati</taxon>
        <taxon>Bacillota</taxon>
        <taxon>Bacilli</taxon>
        <taxon>Bacillales</taxon>
        <taxon>Anoxybacillaceae</taxon>
        <taxon>Geobacillus</taxon>
    </lineage>
</organism>
<sequence length="93" mass="11067">MFPKRQGIIVWLHSLKHSKHLRKFGNIHYVSKRLKYAVLYCDMEQVDEMMKKLASLPFVKRVEPSYRPFLKLEFESKGEKEKNSSYPLGYSAE</sequence>
<evidence type="ECO:0000255" key="1">
    <source>
        <dbReference type="HAMAP-Rule" id="MF_01126"/>
    </source>
</evidence>
<gene>
    <name type="ordered locus">GWCH70_0997</name>
</gene>
<name>Y997_GEOSW</name>